<comment type="function">
    <text evidence="1">Binds as a heterodimer with protein bS6 to the central domain of the 16S rRNA, where it helps stabilize the platform of the 30S subunit.</text>
</comment>
<comment type="subunit">
    <text evidence="1">Part of the 30S ribosomal subunit. Forms a tight heterodimer with protein bS6.</text>
</comment>
<comment type="similarity">
    <text evidence="1">Belongs to the bacterial ribosomal protein bS18 family.</text>
</comment>
<dbReference type="EMBL" id="CP000413">
    <property type="protein sequence ID" value="ABJ59426.1"/>
    <property type="molecule type" value="Genomic_DNA"/>
</dbReference>
<dbReference type="RefSeq" id="WP_003648133.1">
    <property type="nucleotide sequence ID" value="NZ_WBMG01000006.1"/>
</dbReference>
<dbReference type="SMR" id="Q047E6"/>
<dbReference type="GeneID" id="29639729"/>
<dbReference type="KEGG" id="lga:LGAS_0009"/>
<dbReference type="HOGENOM" id="CLU_148710_2_2_9"/>
<dbReference type="BioCyc" id="LGAS324831:G1G6Y-9-MONOMER"/>
<dbReference type="Proteomes" id="UP000000664">
    <property type="component" value="Chromosome"/>
</dbReference>
<dbReference type="GO" id="GO:0022627">
    <property type="term" value="C:cytosolic small ribosomal subunit"/>
    <property type="evidence" value="ECO:0007669"/>
    <property type="project" value="TreeGrafter"/>
</dbReference>
<dbReference type="GO" id="GO:0070181">
    <property type="term" value="F:small ribosomal subunit rRNA binding"/>
    <property type="evidence" value="ECO:0007669"/>
    <property type="project" value="TreeGrafter"/>
</dbReference>
<dbReference type="GO" id="GO:0003735">
    <property type="term" value="F:structural constituent of ribosome"/>
    <property type="evidence" value="ECO:0007669"/>
    <property type="project" value="InterPro"/>
</dbReference>
<dbReference type="GO" id="GO:0006412">
    <property type="term" value="P:translation"/>
    <property type="evidence" value="ECO:0007669"/>
    <property type="project" value="UniProtKB-UniRule"/>
</dbReference>
<dbReference type="FunFam" id="4.10.640.10:FF:000003">
    <property type="entry name" value="30S ribosomal protein S18"/>
    <property type="match status" value="1"/>
</dbReference>
<dbReference type="Gene3D" id="4.10.640.10">
    <property type="entry name" value="Ribosomal protein S18"/>
    <property type="match status" value="1"/>
</dbReference>
<dbReference type="HAMAP" id="MF_00270">
    <property type="entry name" value="Ribosomal_bS18"/>
    <property type="match status" value="1"/>
</dbReference>
<dbReference type="InterPro" id="IPR001648">
    <property type="entry name" value="Ribosomal_bS18"/>
</dbReference>
<dbReference type="InterPro" id="IPR018275">
    <property type="entry name" value="Ribosomal_bS18_CS"/>
</dbReference>
<dbReference type="InterPro" id="IPR036870">
    <property type="entry name" value="Ribosomal_bS18_sf"/>
</dbReference>
<dbReference type="NCBIfam" id="TIGR00165">
    <property type="entry name" value="S18"/>
    <property type="match status" value="1"/>
</dbReference>
<dbReference type="PANTHER" id="PTHR13479">
    <property type="entry name" value="30S RIBOSOMAL PROTEIN S18"/>
    <property type="match status" value="1"/>
</dbReference>
<dbReference type="PANTHER" id="PTHR13479:SF40">
    <property type="entry name" value="SMALL RIBOSOMAL SUBUNIT PROTEIN BS18M"/>
    <property type="match status" value="1"/>
</dbReference>
<dbReference type="Pfam" id="PF01084">
    <property type="entry name" value="Ribosomal_S18"/>
    <property type="match status" value="1"/>
</dbReference>
<dbReference type="PRINTS" id="PR00974">
    <property type="entry name" value="RIBOSOMALS18"/>
</dbReference>
<dbReference type="SUPFAM" id="SSF46911">
    <property type="entry name" value="Ribosomal protein S18"/>
    <property type="match status" value="1"/>
</dbReference>
<dbReference type="PROSITE" id="PS00057">
    <property type="entry name" value="RIBOSOMAL_S18"/>
    <property type="match status" value="1"/>
</dbReference>
<name>RS18_LACGA</name>
<accession>Q047E6</accession>
<sequence length="77" mass="8925">MAQQRRGGRRRKVDFIAANHIDYIDYKDVDLLKRFISERGKILPRRVTGTSAKNQRKLTVAIKRARVMGLLPFVAED</sequence>
<organism>
    <name type="scientific">Lactobacillus gasseri (strain ATCC 33323 / DSM 20243 / BCRC 14619 / CIP 102991 / JCM 1131 / KCTC 3163 / NCIMB 11718 / NCTC 13722 / AM63)</name>
    <dbReference type="NCBI Taxonomy" id="324831"/>
    <lineage>
        <taxon>Bacteria</taxon>
        <taxon>Bacillati</taxon>
        <taxon>Bacillota</taxon>
        <taxon>Bacilli</taxon>
        <taxon>Lactobacillales</taxon>
        <taxon>Lactobacillaceae</taxon>
        <taxon>Lactobacillus</taxon>
    </lineage>
</organism>
<proteinExistence type="inferred from homology"/>
<keyword id="KW-0687">Ribonucleoprotein</keyword>
<keyword id="KW-0689">Ribosomal protein</keyword>
<keyword id="KW-0694">RNA-binding</keyword>
<keyword id="KW-0699">rRNA-binding</keyword>
<protein>
    <recommendedName>
        <fullName evidence="1">Small ribosomal subunit protein bS18</fullName>
    </recommendedName>
    <alternativeName>
        <fullName evidence="2">30S ribosomal protein S18</fullName>
    </alternativeName>
</protein>
<reference key="1">
    <citation type="journal article" date="2006" name="Proc. Natl. Acad. Sci. U.S.A.">
        <title>Comparative genomics of the lactic acid bacteria.</title>
        <authorList>
            <person name="Makarova K.S."/>
            <person name="Slesarev A."/>
            <person name="Wolf Y.I."/>
            <person name="Sorokin A."/>
            <person name="Mirkin B."/>
            <person name="Koonin E.V."/>
            <person name="Pavlov A."/>
            <person name="Pavlova N."/>
            <person name="Karamychev V."/>
            <person name="Polouchine N."/>
            <person name="Shakhova V."/>
            <person name="Grigoriev I."/>
            <person name="Lou Y."/>
            <person name="Rohksar D."/>
            <person name="Lucas S."/>
            <person name="Huang K."/>
            <person name="Goodstein D.M."/>
            <person name="Hawkins T."/>
            <person name="Plengvidhya V."/>
            <person name="Welker D."/>
            <person name="Hughes J."/>
            <person name="Goh Y."/>
            <person name="Benson A."/>
            <person name="Baldwin K."/>
            <person name="Lee J.-H."/>
            <person name="Diaz-Muniz I."/>
            <person name="Dosti B."/>
            <person name="Smeianov V."/>
            <person name="Wechter W."/>
            <person name="Barabote R."/>
            <person name="Lorca G."/>
            <person name="Altermann E."/>
            <person name="Barrangou R."/>
            <person name="Ganesan B."/>
            <person name="Xie Y."/>
            <person name="Rawsthorne H."/>
            <person name="Tamir D."/>
            <person name="Parker C."/>
            <person name="Breidt F."/>
            <person name="Broadbent J.R."/>
            <person name="Hutkins R."/>
            <person name="O'Sullivan D."/>
            <person name="Steele J."/>
            <person name="Unlu G."/>
            <person name="Saier M.H. Jr."/>
            <person name="Klaenhammer T."/>
            <person name="Richardson P."/>
            <person name="Kozyavkin S."/>
            <person name="Weimer B.C."/>
            <person name="Mills D.A."/>
        </authorList>
    </citation>
    <scope>NUCLEOTIDE SEQUENCE [LARGE SCALE GENOMIC DNA]</scope>
    <source>
        <strain>ATCC 33323 / DSM 20243 / BCRC 14619 / CIP 102991 / JCM 1131 / KCTC 3163 / NCIMB 11718 / NCTC 13722 / AM63</strain>
    </source>
</reference>
<evidence type="ECO:0000255" key="1">
    <source>
        <dbReference type="HAMAP-Rule" id="MF_00270"/>
    </source>
</evidence>
<evidence type="ECO:0000305" key="2"/>
<feature type="chain" id="PRO_1000003518" description="Small ribosomal subunit protein bS18">
    <location>
        <begin position="1"/>
        <end position="77"/>
    </location>
</feature>
<gene>
    <name evidence="1" type="primary">rpsR</name>
    <name type="ordered locus">LGAS_0009</name>
</gene>